<evidence type="ECO:0000255" key="1">
    <source>
        <dbReference type="HAMAP-Rule" id="MF_03035"/>
    </source>
</evidence>
<evidence type="ECO:0000256" key="2">
    <source>
        <dbReference type="SAM" id="MobiDB-lite"/>
    </source>
</evidence>
<evidence type="ECO:0000305" key="3"/>
<gene>
    <name evidence="1" type="primary">CLP1</name>
    <name type="ORF">SNOG_14068</name>
</gene>
<organism>
    <name type="scientific">Phaeosphaeria nodorum (strain SN15 / ATCC MYA-4574 / FGSC 10173)</name>
    <name type="common">Glume blotch fungus</name>
    <name type="synonym">Parastagonospora nodorum</name>
    <dbReference type="NCBI Taxonomy" id="321614"/>
    <lineage>
        <taxon>Eukaryota</taxon>
        <taxon>Fungi</taxon>
        <taxon>Dikarya</taxon>
        <taxon>Ascomycota</taxon>
        <taxon>Pezizomycotina</taxon>
        <taxon>Dothideomycetes</taxon>
        <taxon>Pleosporomycetidae</taxon>
        <taxon>Pleosporales</taxon>
        <taxon>Pleosporineae</taxon>
        <taxon>Phaeosphaeriaceae</taxon>
        <taxon>Parastagonospora</taxon>
    </lineage>
</organism>
<dbReference type="EMBL" id="CH445353">
    <property type="protein sequence ID" value="EAT78693.1"/>
    <property type="molecule type" value="Genomic_DNA"/>
</dbReference>
<dbReference type="RefSeq" id="XP_001804268.1">
    <property type="nucleotide sequence ID" value="XM_001804216.1"/>
</dbReference>
<dbReference type="SMR" id="Q0U2G5"/>
<dbReference type="FunCoup" id="Q0U2G5">
    <property type="interactions" value="784"/>
</dbReference>
<dbReference type="STRING" id="321614.Q0U2G5"/>
<dbReference type="EnsemblFungi" id="SNOT_14068">
    <property type="protein sequence ID" value="SNOT_14068"/>
    <property type="gene ID" value="SNOG_14068"/>
</dbReference>
<dbReference type="GeneID" id="5981191"/>
<dbReference type="KEGG" id="pno:SNOG_14068"/>
<dbReference type="VEuPathDB" id="FungiDB:JI435_140680"/>
<dbReference type="eggNOG" id="KOG2749">
    <property type="taxonomic scope" value="Eukaryota"/>
</dbReference>
<dbReference type="HOGENOM" id="CLU_018195_3_1_1"/>
<dbReference type="InParanoid" id="Q0U2G5"/>
<dbReference type="OMA" id="VQYVNCH"/>
<dbReference type="OrthoDB" id="258143at2759"/>
<dbReference type="Proteomes" id="UP000001055">
    <property type="component" value="Unassembled WGS sequence"/>
</dbReference>
<dbReference type="GO" id="GO:0005849">
    <property type="term" value="C:mRNA cleavage factor complex"/>
    <property type="evidence" value="ECO:0007669"/>
    <property type="project" value="UniProtKB-UniRule"/>
</dbReference>
<dbReference type="GO" id="GO:0005634">
    <property type="term" value="C:nucleus"/>
    <property type="evidence" value="ECO:0000318"/>
    <property type="project" value="GO_Central"/>
</dbReference>
<dbReference type="GO" id="GO:0005524">
    <property type="term" value="F:ATP binding"/>
    <property type="evidence" value="ECO:0007669"/>
    <property type="project" value="UniProtKB-UniRule"/>
</dbReference>
<dbReference type="GO" id="GO:0051731">
    <property type="term" value="F:polynucleotide 5'-hydroxyl-kinase activity"/>
    <property type="evidence" value="ECO:0000318"/>
    <property type="project" value="GO_Central"/>
</dbReference>
<dbReference type="GO" id="GO:0031124">
    <property type="term" value="P:mRNA 3'-end processing"/>
    <property type="evidence" value="ECO:0007669"/>
    <property type="project" value="UniProtKB-UniRule"/>
</dbReference>
<dbReference type="GO" id="GO:0006388">
    <property type="term" value="P:tRNA splicing, via endonucleolytic cleavage and ligation"/>
    <property type="evidence" value="ECO:0000318"/>
    <property type="project" value="GO_Central"/>
</dbReference>
<dbReference type="FunFam" id="2.60.120.1030:FF:000001">
    <property type="entry name" value="Protein CLP1 homolog 5"/>
    <property type="match status" value="1"/>
</dbReference>
<dbReference type="Gene3D" id="2.60.120.1030">
    <property type="entry name" value="Clp1, DNA binding domain"/>
    <property type="match status" value="1"/>
</dbReference>
<dbReference type="Gene3D" id="3.40.50.300">
    <property type="entry name" value="P-loop containing nucleotide triphosphate hydrolases"/>
    <property type="match status" value="1"/>
</dbReference>
<dbReference type="Gene3D" id="2.40.30.330">
    <property type="entry name" value="Pre-mRNA cleavage complex subunit Clp1, C-terminal domain"/>
    <property type="match status" value="1"/>
</dbReference>
<dbReference type="HAMAP" id="MF_03035">
    <property type="entry name" value="Clp1"/>
    <property type="match status" value="1"/>
</dbReference>
<dbReference type="InterPro" id="IPR028606">
    <property type="entry name" value="Clp1"/>
</dbReference>
<dbReference type="InterPro" id="IPR045116">
    <property type="entry name" value="Clp1/Grc3"/>
</dbReference>
<dbReference type="InterPro" id="IPR010655">
    <property type="entry name" value="Clp1_C"/>
</dbReference>
<dbReference type="InterPro" id="IPR038238">
    <property type="entry name" value="Clp1_C_sf"/>
</dbReference>
<dbReference type="InterPro" id="IPR032324">
    <property type="entry name" value="Clp1_N"/>
</dbReference>
<dbReference type="InterPro" id="IPR038239">
    <property type="entry name" value="Clp1_N_sf"/>
</dbReference>
<dbReference type="InterPro" id="IPR032319">
    <property type="entry name" value="CLP1_P"/>
</dbReference>
<dbReference type="InterPro" id="IPR027417">
    <property type="entry name" value="P-loop_NTPase"/>
</dbReference>
<dbReference type="PANTHER" id="PTHR12755">
    <property type="entry name" value="CLEAVAGE/POLYADENYLATION FACTOR IA SUBUNIT CLP1P"/>
    <property type="match status" value="1"/>
</dbReference>
<dbReference type="PANTHER" id="PTHR12755:SF6">
    <property type="entry name" value="POLYRIBONUCLEOTIDE 5'-HYDROXYL-KINASE CLP1"/>
    <property type="match status" value="1"/>
</dbReference>
<dbReference type="Pfam" id="PF06807">
    <property type="entry name" value="Clp1"/>
    <property type="match status" value="1"/>
</dbReference>
<dbReference type="Pfam" id="PF16573">
    <property type="entry name" value="CLP1_N"/>
    <property type="match status" value="1"/>
</dbReference>
<dbReference type="Pfam" id="PF16575">
    <property type="entry name" value="CLP1_P"/>
    <property type="match status" value="1"/>
</dbReference>
<dbReference type="SUPFAM" id="SSF52540">
    <property type="entry name" value="P-loop containing nucleoside triphosphate hydrolases"/>
    <property type="match status" value="1"/>
</dbReference>
<keyword id="KW-0067">ATP-binding</keyword>
<keyword id="KW-0507">mRNA processing</keyword>
<keyword id="KW-0547">Nucleotide-binding</keyword>
<keyword id="KW-0539">Nucleus</keyword>
<sequence>MLSLPGLNLAPQPAEPLNAPTSTVTRTQDLAANTEYRFEVSFARTLTIKLQSGTAEFFGTELAPSTTYSFQGTKGAVFTWHGCKLEIGGEVESDYVAEETPMMSCANLHFALELLRDQSVSSGSAEMGPRVLVVGPEHSGKTSLVKVMTSYAAKTSRQPMVVNLDPRQGMLSIPGSFSAAAYSSIVDIEEGWGSSPISGPSPIPVKMPLVYHYGLKDPEEGKVFKPLVTRMALAVTSRLEEDKLSKQAGFIIDSSGAISQGRNGVYENIEHIVSEFSVNVLITLGSERLYSDLSRKYRNRDPSESVNVIRLDKSGGCVNRPEEYMKALRHAQVREYFFGHGDNTLAPSSQTCDFGDLHIFQIVEGDEGALYRSGDYDEYDPSNVSLASIYTRVTPSPSLQNSLLAITTASPTDSQDVIRDSSVKGYIYVADVDEAKKKVRLLSPQPGMIPGNAMVLGTWPEDVPGLVG</sequence>
<proteinExistence type="inferred from homology"/>
<reference key="1">
    <citation type="journal article" date="2007" name="Plant Cell">
        <title>Dothideomycete-plant interactions illuminated by genome sequencing and EST analysis of the wheat pathogen Stagonospora nodorum.</title>
        <authorList>
            <person name="Hane J.K."/>
            <person name="Lowe R.G.T."/>
            <person name="Solomon P.S."/>
            <person name="Tan K.-C."/>
            <person name="Schoch C.L."/>
            <person name="Spatafora J.W."/>
            <person name="Crous P.W."/>
            <person name="Kodira C.D."/>
            <person name="Birren B.W."/>
            <person name="Galagan J.E."/>
            <person name="Torriani S.F.F."/>
            <person name="McDonald B.A."/>
            <person name="Oliver R.P."/>
        </authorList>
    </citation>
    <scope>NUCLEOTIDE SEQUENCE [LARGE SCALE GENOMIC DNA]</scope>
    <source>
        <strain>SN15 / ATCC MYA-4574 / FGSC 10173</strain>
    </source>
</reference>
<feature type="chain" id="PRO_0000375213" description="mRNA cleavage and polyadenylation factor CLP1">
    <location>
        <begin position="1"/>
        <end position="468"/>
    </location>
</feature>
<feature type="region of interest" description="Disordered" evidence="2">
    <location>
        <begin position="1"/>
        <end position="22"/>
    </location>
</feature>
<feature type="binding site" evidence="1">
    <location>
        <position position="35"/>
    </location>
    <ligand>
        <name>ATP</name>
        <dbReference type="ChEBI" id="CHEBI:30616"/>
    </ligand>
</feature>
<feature type="binding site" evidence="1">
    <location>
        <position position="74"/>
    </location>
    <ligand>
        <name>ATP</name>
        <dbReference type="ChEBI" id="CHEBI:30616"/>
    </ligand>
</feature>
<feature type="binding site" evidence="1">
    <location>
        <begin position="138"/>
        <end position="143"/>
    </location>
    <ligand>
        <name>ATP</name>
        <dbReference type="ChEBI" id="CHEBI:30616"/>
    </ligand>
</feature>
<comment type="function">
    <text evidence="1">Required for endonucleolytic cleavage during polyadenylation-dependent pre-mRNA 3'-end formation.</text>
</comment>
<comment type="subunit">
    <text evidence="1">Component of a pre-mRNA cleavage factor complex. Interacts directly with PCF11.</text>
</comment>
<comment type="subcellular location">
    <subcellularLocation>
        <location evidence="1">Nucleus</location>
    </subcellularLocation>
</comment>
<comment type="similarity">
    <text evidence="1">Belongs to the Clp1 family. Clp1 subfamily.</text>
</comment>
<comment type="caution">
    <text evidence="3">May lack the polyribonucleotide 5'-hydroxyl-kinase and polynucleotide 5'-hydroxyl-kinase activities that are characteristic of the human ortholog.</text>
</comment>
<accession>Q0U2G5</accession>
<name>CLP1_PHANO</name>
<protein>
    <recommendedName>
        <fullName evidence="1">mRNA cleavage and polyadenylation factor CLP1</fullName>
    </recommendedName>
</protein>